<dbReference type="EMBL" id="AY145850">
    <property type="protein sequence ID" value="AAN46105.1"/>
    <property type="molecule type" value="mRNA"/>
</dbReference>
<dbReference type="EMBL" id="AY078982">
    <property type="protein sequence ID" value="AAL85489.3"/>
    <property type="molecule type" value="mRNA"/>
</dbReference>
<dbReference type="EMBL" id="AY255608">
    <property type="protein sequence ID" value="AAO85120.1"/>
    <property type="molecule type" value="mRNA"/>
</dbReference>
<dbReference type="CCDS" id="CCDS22841.1"/>
<dbReference type="SMR" id="Q8CIQ6"/>
<dbReference type="FunCoup" id="Q8CIQ6">
    <property type="interactions" value="369"/>
</dbReference>
<dbReference type="STRING" id="10090.ENSMUSP00000053086"/>
<dbReference type="GuidetoPHARMACOLOGY" id="288"/>
<dbReference type="GlyCosmos" id="Q8CIQ6">
    <property type="glycosylation" value="1 site, No reported glycans"/>
</dbReference>
<dbReference type="GlyGen" id="Q8CIQ6">
    <property type="glycosylation" value="2 sites"/>
</dbReference>
<dbReference type="PaxDb" id="10090-ENSMUSP00000053086"/>
<dbReference type="AGR" id="MGI:2181726"/>
<dbReference type="MGI" id="MGI:2181726">
    <property type="gene designation" value="Mtnr1b"/>
</dbReference>
<dbReference type="eggNOG" id="KOG3656">
    <property type="taxonomic scope" value="Eukaryota"/>
</dbReference>
<dbReference type="InParanoid" id="Q8CIQ6"/>
<dbReference type="PhylomeDB" id="Q8CIQ6"/>
<dbReference type="Reactome" id="R-MMU-373076">
    <property type="pathway name" value="Class A/1 (Rhodopsin-like receptors)"/>
</dbReference>
<dbReference type="Reactome" id="R-MMU-418594">
    <property type="pathway name" value="G alpha (i) signalling events"/>
</dbReference>
<dbReference type="ChiTaRS" id="Mtnr1b">
    <property type="organism name" value="mouse"/>
</dbReference>
<dbReference type="PRO" id="PR:Q8CIQ6"/>
<dbReference type="Proteomes" id="UP000000589">
    <property type="component" value="Unplaced"/>
</dbReference>
<dbReference type="RNAct" id="Q8CIQ6">
    <property type="molecule type" value="protein"/>
</dbReference>
<dbReference type="GO" id="GO:0005886">
    <property type="term" value="C:plasma membrane"/>
    <property type="evidence" value="ECO:0000247"/>
    <property type="project" value="MGI"/>
</dbReference>
<dbReference type="GO" id="GO:0008502">
    <property type="term" value="F:melatonin receptor activity"/>
    <property type="evidence" value="ECO:0000247"/>
    <property type="project" value="MGI"/>
</dbReference>
<dbReference type="GO" id="GO:0007623">
    <property type="term" value="P:circadian rhythm"/>
    <property type="evidence" value="ECO:0000304"/>
    <property type="project" value="MGI"/>
</dbReference>
<dbReference type="FunFam" id="1.20.1070.10:FF:000056">
    <property type="entry name" value="Melatonin receptor type 1A"/>
    <property type="match status" value="1"/>
</dbReference>
<dbReference type="Gene3D" id="1.20.1070.10">
    <property type="entry name" value="Rhodopsin 7-helix transmembrane proteins"/>
    <property type="match status" value="1"/>
</dbReference>
<dbReference type="InterPro" id="IPR000276">
    <property type="entry name" value="GPCR_Rhodpsn"/>
</dbReference>
<dbReference type="InterPro" id="IPR017452">
    <property type="entry name" value="GPCR_Rhodpsn_7TM"/>
</dbReference>
<dbReference type="InterPro" id="IPR000025">
    <property type="entry name" value="Melatonin_rcpt"/>
</dbReference>
<dbReference type="PANTHER" id="PTHR24228">
    <property type="entry name" value="B2 BRADYKININ RECEPTOR/ANGIOTENSIN II RECEPTOR"/>
    <property type="match status" value="1"/>
</dbReference>
<dbReference type="PANTHER" id="PTHR24228:SF54">
    <property type="entry name" value="MELATONIN RECEPTOR TYPE 1B"/>
    <property type="match status" value="1"/>
</dbReference>
<dbReference type="Pfam" id="PF00001">
    <property type="entry name" value="7tm_1"/>
    <property type="match status" value="1"/>
</dbReference>
<dbReference type="PRINTS" id="PR00237">
    <property type="entry name" value="GPCRRHODOPSN"/>
</dbReference>
<dbReference type="PRINTS" id="PR00857">
    <property type="entry name" value="MELATONINR"/>
</dbReference>
<dbReference type="SMART" id="SM01381">
    <property type="entry name" value="7TM_GPCR_Srsx"/>
    <property type="match status" value="1"/>
</dbReference>
<dbReference type="SUPFAM" id="SSF81321">
    <property type="entry name" value="Family A G protein-coupled receptor-like"/>
    <property type="match status" value="1"/>
</dbReference>
<dbReference type="PROSITE" id="PS00237">
    <property type="entry name" value="G_PROTEIN_RECEP_F1_1"/>
    <property type="match status" value="1"/>
</dbReference>
<dbReference type="PROSITE" id="PS50262">
    <property type="entry name" value="G_PROTEIN_RECEP_F1_2"/>
    <property type="match status" value="1"/>
</dbReference>
<feature type="chain" id="PRO_0000069871" description="Melatonin receptor type 1B">
    <location>
        <begin position="1"/>
        <end position="364"/>
    </location>
</feature>
<feature type="topological domain" description="Extracellular" evidence="2">
    <location>
        <begin position="1"/>
        <end position="42"/>
    </location>
</feature>
<feature type="transmembrane region" description="Helical; Name=1" evidence="2">
    <location>
        <begin position="43"/>
        <end position="63"/>
    </location>
</feature>
<feature type="topological domain" description="Cytoplasmic" evidence="2">
    <location>
        <begin position="64"/>
        <end position="76"/>
    </location>
</feature>
<feature type="transmembrane region" description="Helical; Name=2" evidence="2">
    <location>
        <begin position="77"/>
        <end position="97"/>
    </location>
</feature>
<feature type="topological domain" description="Extracellular" evidence="2">
    <location>
        <begin position="98"/>
        <end position="115"/>
    </location>
</feature>
<feature type="transmembrane region" description="Helical; Name=3" evidence="2">
    <location>
        <begin position="116"/>
        <end position="136"/>
    </location>
</feature>
<feature type="topological domain" description="Cytoplasmic" evidence="2">
    <location>
        <begin position="137"/>
        <end position="155"/>
    </location>
</feature>
<feature type="transmembrane region" description="Helical; Name=4" evidence="2">
    <location>
        <begin position="156"/>
        <end position="176"/>
    </location>
</feature>
<feature type="topological domain" description="Extracellular" evidence="2">
    <location>
        <begin position="177"/>
        <end position="200"/>
    </location>
</feature>
<feature type="transmembrane region" description="Helical; Name=5" evidence="2">
    <location>
        <begin position="201"/>
        <end position="221"/>
    </location>
</feature>
<feature type="topological domain" description="Cytoplasmic" evidence="2">
    <location>
        <begin position="222"/>
        <end position="253"/>
    </location>
</feature>
<feature type="transmembrane region" description="Helical; Name=6" evidence="2">
    <location>
        <begin position="254"/>
        <end position="274"/>
    </location>
</feature>
<feature type="topological domain" description="Extracellular" evidence="2">
    <location>
        <begin position="275"/>
        <end position="287"/>
    </location>
</feature>
<feature type="transmembrane region" description="Helical; Name=7" evidence="2">
    <location>
        <begin position="288"/>
        <end position="308"/>
    </location>
</feature>
<feature type="topological domain" description="Cytoplasmic" evidence="2">
    <location>
        <begin position="309"/>
        <end position="364"/>
    </location>
</feature>
<feature type="region of interest" description="Disordered" evidence="4">
    <location>
        <begin position="343"/>
        <end position="364"/>
    </location>
</feature>
<feature type="compositionally biased region" description="Low complexity" evidence="4">
    <location>
        <begin position="352"/>
        <end position="364"/>
    </location>
</feature>
<feature type="glycosylation site" description="N-linked (GlcNAc...) asparagine" evidence="2">
    <location>
        <position position="4"/>
    </location>
</feature>
<feature type="disulfide bond" evidence="3">
    <location>
        <begin position="113"/>
        <end position="190"/>
    </location>
</feature>
<feature type="sequence conflict" description="In Ref. 2; AAL85489." evidence="5" ref="2">
    <original>T</original>
    <variation>E</variation>
    <location>
        <position position="237"/>
    </location>
</feature>
<accession>Q8CIQ6</accession>
<accession>Q80T38</accession>
<accession>Q8K3K0</accession>
<evidence type="ECO:0000250" key="1"/>
<evidence type="ECO:0000255" key="2"/>
<evidence type="ECO:0000255" key="3">
    <source>
        <dbReference type="PROSITE-ProRule" id="PRU00521"/>
    </source>
</evidence>
<evidence type="ECO:0000256" key="4">
    <source>
        <dbReference type="SAM" id="MobiDB-lite"/>
    </source>
</evidence>
<evidence type="ECO:0000305" key="5"/>
<name>MTR1B_MOUSE</name>
<keyword id="KW-1003">Cell membrane</keyword>
<keyword id="KW-1015">Disulfide bond</keyword>
<keyword id="KW-0297">G-protein coupled receptor</keyword>
<keyword id="KW-0325">Glycoprotein</keyword>
<keyword id="KW-0472">Membrane</keyword>
<keyword id="KW-0675">Receptor</keyword>
<keyword id="KW-1185">Reference proteome</keyword>
<keyword id="KW-0807">Transducer</keyword>
<keyword id="KW-0812">Transmembrane</keyword>
<keyword id="KW-1133">Transmembrane helix</keyword>
<protein>
    <recommendedName>
        <fullName>Melatonin receptor type 1B</fullName>
        <shortName>Mel-1B-R</shortName>
        <shortName>Mel1b receptor</shortName>
    </recommendedName>
</protein>
<comment type="function">
    <text evidence="1">High affinity receptor for melatonin. The activity of this receptor is mediated by pertussis toxin sensitive G proteins that inhibits adenylate cyclase activity (By similarity).</text>
</comment>
<comment type="subcellular location">
    <subcellularLocation>
        <location>Cell membrane</location>
        <topology>Multi-pass membrane protein</topology>
    </subcellularLocation>
</comment>
<comment type="similarity">
    <text evidence="3">Belongs to the G-protein coupled receptor 1 family.</text>
</comment>
<proteinExistence type="evidence at transcript level"/>
<organism>
    <name type="scientific">Mus musculus</name>
    <name type="common">Mouse</name>
    <dbReference type="NCBI Taxonomy" id="10090"/>
    <lineage>
        <taxon>Eukaryota</taxon>
        <taxon>Metazoa</taxon>
        <taxon>Chordata</taxon>
        <taxon>Craniata</taxon>
        <taxon>Vertebrata</taxon>
        <taxon>Euteleostomi</taxon>
        <taxon>Mammalia</taxon>
        <taxon>Eutheria</taxon>
        <taxon>Euarchontoglires</taxon>
        <taxon>Glires</taxon>
        <taxon>Rodentia</taxon>
        <taxon>Myomorpha</taxon>
        <taxon>Muroidea</taxon>
        <taxon>Muridae</taxon>
        <taxon>Murinae</taxon>
        <taxon>Mus</taxon>
        <taxon>Mus</taxon>
    </lineage>
</organism>
<sequence>MPENSSIPNCCEASGLAARPSWSGSAGARPPVTARAPWVAPMLSTVVVVTTAVDFVGNLLVILSVLRNRKLRNAGNLFVVSLALADLVIALYPYPLILVAIIRDGWVLGEAHCKASAFVMGLSVIGSVFNITAIAINRYCCICHSTTYHRVCSHWYTPIYISLVWLLTLVALVPNFFVGSLEYDPRIYSCTFIQTASTQYTAAVVAIHFLLPMAVVSFCYLRIWVLVLQARRKAKATRKLRLRPSDLRSFLTMFAVFVVFAICWAPLNCIGLAVAINPEAMALQVPEGLFVTSYFLAYFNSCLNAIVYGLLNQNFRREYKRILLAIWNTRRCIQHASKHCLTEERQGPTPPAARATVPVKEGAL</sequence>
<gene>
    <name type="primary">Mtnr1b</name>
</gene>
<reference key="1">
    <citation type="submission" date="2002-08" db="EMBL/GenBank/DDBJ databases">
        <title>Targeted disruption of the mouse Mel1b melatonin receptor.</title>
        <authorList>
            <person name="Jin X."/>
            <person name="von Gall C."/>
            <person name="Pieschl R.L."/>
            <person name="Gribkoff V.K."/>
            <person name="Stehle J.H."/>
            <person name="Reppert S.M."/>
            <person name="Weaver D.R."/>
        </authorList>
    </citation>
    <scope>NUCLEOTIDE SEQUENCE [MRNA]</scope>
    <source>
        <strain>129/Sv</strain>
    </source>
</reference>
<reference key="2">
    <citation type="submission" date="2003-02" db="EMBL/GenBank/DDBJ databases">
        <authorList>
            <person name="Resuehr D."/>
            <person name="Olcese J."/>
        </authorList>
    </citation>
    <scope>NUCLEOTIDE SEQUENCE [MRNA] OF 142-364</scope>
    <source>
        <strain>C57BL/6 X C3H</strain>
    </source>
</reference>
<reference key="3">
    <citation type="journal article" date="2003" name="Proc. Natl. Acad. Sci. U.S.A.">
        <title>The G protein-coupled receptor repertoires of human and mouse.</title>
        <authorList>
            <person name="Vassilatis D.K."/>
            <person name="Hohmann J.G."/>
            <person name="Zeng H."/>
            <person name="Li F."/>
            <person name="Ranchalis J.E."/>
            <person name="Mortrud M.T."/>
            <person name="Brown A."/>
            <person name="Rodriguez S.S."/>
            <person name="Weller J.R."/>
            <person name="Wright A.C."/>
            <person name="Bergmann J.E."/>
            <person name="Gaitanaris G.A."/>
        </authorList>
    </citation>
    <scope>NUCLEOTIDE SEQUENCE [LARGE SCALE MRNA] OF 143-253</scope>
</reference>